<sequence>MKEYQPQKIESKWQKRWQDEISYETEVDHNKDKYYVLEMFPYPSGKLHMGHMRVYSIGDVLARFQRMRGYNVLHPMGWDAFGLPAENAAIENQDLPSRWTYANIDNMKDQLQALGTSYDWKREVSTCSPDYYKWTQWMFLQLYKNGLAYKKKAPVNWCPECETVLANEQVENGACWRCDSMVEQKQLSQWFFKITEYADRLDQDLELLEEWPDRVKTMQKNWIGKSQGTEIDFPVKGSREKIRAFTTRPDTIFGATYMVLAPEHPMTEQLVQGTDQEKEVMDFIKGVHEMGKEAREAEDLEKEGVFTGRWAINPLNGEEIPILVGNYVLMEYGTGAIMAVPAHDQRDFQFAHKYNLPIKEVVTPPEGEGKTESETHDELKKAYTDHGILINSPGYNGMTSEQAIEQITRDIENKGIGAGVTTYRLRDWLVSRQRYWGAPIPVLYCDQCGILPVPEDELPVQLPEDVDFSQGSRNVLAARQDFVETSCPQCGGSAQRETDTMDTFVCSSWYFLRYTTPWDNEVPFRQEDVNYWMPVDQYIGGIEHAVLHLLYARFFTKVMYDQGYTNFKEPFSRLLAQGMVNKDGAKMSKSKGNVVSPDEILRTYGADTGRLFILFAAPPEKDLDWNDEGVEGCYRFLQRLYRLVNDNQNLVDLQLDDTKFTKEDKEYHRLIHKTIKKVTDDISERHNFNTAISAIMELTNASSKYKEQKEVNESLLRTGLETIVMLLAPFTPHIAEELWETLGYQDSVHKLNWPSYDEKAMVAEEAEMVVQVNGKVRDHLTVPADSSEETIKEKALEREKVQKYISGAEIKKVIVIPQKLVNIVCK</sequence>
<comment type="catalytic activity">
    <reaction evidence="1">
        <text>tRNA(Leu) + L-leucine + ATP = L-leucyl-tRNA(Leu) + AMP + diphosphate</text>
        <dbReference type="Rhea" id="RHEA:11688"/>
        <dbReference type="Rhea" id="RHEA-COMP:9613"/>
        <dbReference type="Rhea" id="RHEA-COMP:9622"/>
        <dbReference type="ChEBI" id="CHEBI:30616"/>
        <dbReference type="ChEBI" id="CHEBI:33019"/>
        <dbReference type="ChEBI" id="CHEBI:57427"/>
        <dbReference type="ChEBI" id="CHEBI:78442"/>
        <dbReference type="ChEBI" id="CHEBI:78494"/>
        <dbReference type="ChEBI" id="CHEBI:456215"/>
        <dbReference type="EC" id="6.1.1.4"/>
    </reaction>
</comment>
<comment type="subcellular location">
    <subcellularLocation>
        <location evidence="1">Cytoplasm</location>
    </subcellularLocation>
</comment>
<comment type="similarity">
    <text evidence="1">Belongs to the class-I aminoacyl-tRNA synthetase family.</text>
</comment>
<gene>
    <name evidence="1" type="primary">leuS</name>
    <name type="ordered locus">Nther_0537</name>
</gene>
<dbReference type="EC" id="6.1.1.4" evidence="1"/>
<dbReference type="EMBL" id="CP001034">
    <property type="protein sequence ID" value="ACB84133.1"/>
    <property type="molecule type" value="Genomic_DNA"/>
</dbReference>
<dbReference type="RefSeq" id="WP_012447019.1">
    <property type="nucleotide sequence ID" value="NC_010718.1"/>
</dbReference>
<dbReference type="SMR" id="B2A6C2"/>
<dbReference type="FunCoup" id="B2A6C2">
    <property type="interactions" value="488"/>
</dbReference>
<dbReference type="STRING" id="457570.Nther_0537"/>
<dbReference type="KEGG" id="nth:Nther_0537"/>
<dbReference type="eggNOG" id="COG0495">
    <property type="taxonomic scope" value="Bacteria"/>
</dbReference>
<dbReference type="HOGENOM" id="CLU_004427_0_0_9"/>
<dbReference type="InParanoid" id="B2A6C2"/>
<dbReference type="OrthoDB" id="9810365at2"/>
<dbReference type="Proteomes" id="UP000001683">
    <property type="component" value="Chromosome"/>
</dbReference>
<dbReference type="GO" id="GO:0005829">
    <property type="term" value="C:cytosol"/>
    <property type="evidence" value="ECO:0007669"/>
    <property type="project" value="TreeGrafter"/>
</dbReference>
<dbReference type="GO" id="GO:0002161">
    <property type="term" value="F:aminoacyl-tRNA deacylase activity"/>
    <property type="evidence" value="ECO:0007669"/>
    <property type="project" value="InterPro"/>
</dbReference>
<dbReference type="GO" id="GO:0005524">
    <property type="term" value="F:ATP binding"/>
    <property type="evidence" value="ECO:0007669"/>
    <property type="project" value="UniProtKB-UniRule"/>
</dbReference>
<dbReference type="GO" id="GO:0004823">
    <property type="term" value="F:leucine-tRNA ligase activity"/>
    <property type="evidence" value="ECO:0007669"/>
    <property type="project" value="UniProtKB-UniRule"/>
</dbReference>
<dbReference type="GO" id="GO:0006429">
    <property type="term" value="P:leucyl-tRNA aminoacylation"/>
    <property type="evidence" value="ECO:0007669"/>
    <property type="project" value="UniProtKB-UniRule"/>
</dbReference>
<dbReference type="CDD" id="cd07958">
    <property type="entry name" value="Anticodon_Ia_Leu_BEm"/>
    <property type="match status" value="1"/>
</dbReference>
<dbReference type="CDD" id="cd00812">
    <property type="entry name" value="LeuRS_core"/>
    <property type="match status" value="1"/>
</dbReference>
<dbReference type="FunFam" id="3.10.20.590:FF:000001">
    <property type="entry name" value="Leucine--tRNA ligase"/>
    <property type="match status" value="1"/>
</dbReference>
<dbReference type="FunFam" id="3.40.50.620:FF:000003">
    <property type="entry name" value="Leucine--tRNA ligase"/>
    <property type="match status" value="1"/>
</dbReference>
<dbReference type="FunFam" id="1.10.730.10:FF:000011">
    <property type="entry name" value="Leucine--tRNA ligase chloroplastic/mitochondrial"/>
    <property type="match status" value="1"/>
</dbReference>
<dbReference type="FunFam" id="3.40.50.620:FF:000100">
    <property type="entry name" value="probable leucine--tRNA ligase, mitochondrial"/>
    <property type="match status" value="1"/>
</dbReference>
<dbReference type="Gene3D" id="3.10.20.590">
    <property type="match status" value="1"/>
</dbReference>
<dbReference type="Gene3D" id="3.40.50.620">
    <property type="entry name" value="HUPs"/>
    <property type="match status" value="2"/>
</dbReference>
<dbReference type="Gene3D" id="1.10.730.10">
    <property type="entry name" value="Isoleucyl-tRNA Synthetase, Domain 1"/>
    <property type="match status" value="1"/>
</dbReference>
<dbReference type="HAMAP" id="MF_00049_B">
    <property type="entry name" value="Leu_tRNA_synth_B"/>
    <property type="match status" value="1"/>
</dbReference>
<dbReference type="InterPro" id="IPR001412">
    <property type="entry name" value="aa-tRNA-synth_I_CS"/>
</dbReference>
<dbReference type="InterPro" id="IPR002300">
    <property type="entry name" value="aa-tRNA-synth_Ia"/>
</dbReference>
<dbReference type="InterPro" id="IPR002302">
    <property type="entry name" value="Leu-tRNA-ligase"/>
</dbReference>
<dbReference type="InterPro" id="IPR025709">
    <property type="entry name" value="Leu_tRNA-synth_edit"/>
</dbReference>
<dbReference type="InterPro" id="IPR013155">
    <property type="entry name" value="M/V/L/I-tRNA-synth_anticd-bd"/>
</dbReference>
<dbReference type="InterPro" id="IPR015413">
    <property type="entry name" value="Methionyl/Leucyl_tRNA_Synth"/>
</dbReference>
<dbReference type="InterPro" id="IPR014729">
    <property type="entry name" value="Rossmann-like_a/b/a_fold"/>
</dbReference>
<dbReference type="InterPro" id="IPR009080">
    <property type="entry name" value="tRNAsynth_Ia_anticodon-bd"/>
</dbReference>
<dbReference type="InterPro" id="IPR009008">
    <property type="entry name" value="Val/Leu/Ile-tRNA-synth_edit"/>
</dbReference>
<dbReference type="NCBIfam" id="TIGR00396">
    <property type="entry name" value="leuS_bact"/>
    <property type="match status" value="1"/>
</dbReference>
<dbReference type="PANTHER" id="PTHR43740:SF2">
    <property type="entry name" value="LEUCINE--TRNA LIGASE, MITOCHONDRIAL"/>
    <property type="match status" value="1"/>
</dbReference>
<dbReference type="PANTHER" id="PTHR43740">
    <property type="entry name" value="LEUCYL-TRNA SYNTHETASE"/>
    <property type="match status" value="1"/>
</dbReference>
<dbReference type="Pfam" id="PF08264">
    <property type="entry name" value="Anticodon_1"/>
    <property type="match status" value="1"/>
</dbReference>
<dbReference type="Pfam" id="PF00133">
    <property type="entry name" value="tRNA-synt_1"/>
    <property type="match status" value="1"/>
</dbReference>
<dbReference type="Pfam" id="PF13603">
    <property type="entry name" value="tRNA-synt_1_2"/>
    <property type="match status" value="1"/>
</dbReference>
<dbReference type="Pfam" id="PF09334">
    <property type="entry name" value="tRNA-synt_1g"/>
    <property type="match status" value="1"/>
</dbReference>
<dbReference type="PRINTS" id="PR00985">
    <property type="entry name" value="TRNASYNTHLEU"/>
</dbReference>
<dbReference type="SUPFAM" id="SSF47323">
    <property type="entry name" value="Anticodon-binding domain of a subclass of class I aminoacyl-tRNA synthetases"/>
    <property type="match status" value="1"/>
</dbReference>
<dbReference type="SUPFAM" id="SSF52374">
    <property type="entry name" value="Nucleotidylyl transferase"/>
    <property type="match status" value="1"/>
</dbReference>
<dbReference type="SUPFAM" id="SSF50677">
    <property type="entry name" value="ValRS/IleRS/LeuRS editing domain"/>
    <property type="match status" value="1"/>
</dbReference>
<dbReference type="PROSITE" id="PS00178">
    <property type="entry name" value="AA_TRNA_LIGASE_I"/>
    <property type="match status" value="1"/>
</dbReference>
<protein>
    <recommendedName>
        <fullName evidence="1">Leucine--tRNA ligase</fullName>
        <ecNumber evidence="1">6.1.1.4</ecNumber>
    </recommendedName>
    <alternativeName>
        <fullName evidence="1">Leucyl-tRNA synthetase</fullName>
        <shortName evidence="1">LeuRS</shortName>
    </alternativeName>
</protein>
<organism>
    <name type="scientific">Natranaerobius thermophilus (strain ATCC BAA-1301 / DSM 18059 / JW/NM-WN-LF)</name>
    <dbReference type="NCBI Taxonomy" id="457570"/>
    <lineage>
        <taxon>Bacteria</taxon>
        <taxon>Bacillati</taxon>
        <taxon>Bacillota</taxon>
        <taxon>Clostridia</taxon>
        <taxon>Natranaerobiales</taxon>
        <taxon>Natranaerobiaceae</taxon>
        <taxon>Natranaerobius</taxon>
    </lineage>
</organism>
<proteinExistence type="inferred from homology"/>
<name>SYL_NATTJ</name>
<accession>B2A6C2</accession>
<reference key="1">
    <citation type="submission" date="2008-04" db="EMBL/GenBank/DDBJ databases">
        <title>Complete sequence of chromosome of Natranaerobius thermophilus JW/NM-WN-LF.</title>
        <authorList>
            <consortium name="US DOE Joint Genome Institute"/>
            <person name="Copeland A."/>
            <person name="Lucas S."/>
            <person name="Lapidus A."/>
            <person name="Glavina del Rio T."/>
            <person name="Dalin E."/>
            <person name="Tice H."/>
            <person name="Bruce D."/>
            <person name="Goodwin L."/>
            <person name="Pitluck S."/>
            <person name="Chertkov O."/>
            <person name="Brettin T."/>
            <person name="Detter J.C."/>
            <person name="Han C."/>
            <person name="Kuske C.R."/>
            <person name="Schmutz J."/>
            <person name="Larimer F."/>
            <person name="Land M."/>
            <person name="Hauser L."/>
            <person name="Kyrpides N."/>
            <person name="Lykidis A."/>
            <person name="Mesbah N.M."/>
            <person name="Wiegel J."/>
        </authorList>
    </citation>
    <scope>NUCLEOTIDE SEQUENCE [LARGE SCALE GENOMIC DNA]</scope>
    <source>
        <strain>ATCC BAA-1301 / DSM 18059 / JW/NM-WN-LF</strain>
    </source>
</reference>
<evidence type="ECO:0000255" key="1">
    <source>
        <dbReference type="HAMAP-Rule" id="MF_00049"/>
    </source>
</evidence>
<feature type="chain" id="PRO_1000091337" description="Leucine--tRNA ligase">
    <location>
        <begin position="1"/>
        <end position="826"/>
    </location>
</feature>
<feature type="short sequence motif" description="'HIGH' region">
    <location>
        <begin position="41"/>
        <end position="51"/>
    </location>
</feature>
<feature type="short sequence motif" description="'KMSKS' region">
    <location>
        <begin position="586"/>
        <end position="590"/>
    </location>
</feature>
<feature type="binding site" evidence="1">
    <location>
        <position position="589"/>
    </location>
    <ligand>
        <name>ATP</name>
        <dbReference type="ChEBI" id="CHEBI:30616"/>
    </ligand>
</feature>
<keyword id="KW-0030">Aminoacyl-tRNA synthetase</keyword>
<keyword id="KW-0067">ATP-binding</keyword>
<keyword id="KW-0963">Cytoplasm</keyword>
<keyword id="KW-0436">Ligase</keyword>
<keyword id="KW-0547">Nucleotide-binding</keyword>
<keyword id="KW-0648">Protein biosynthesis</keyword>
<keyword id="KW-1185">Reference proteome</keyword>